<protein>
    <recommendedName>
        <fullName>Double-stranded RNA-binding protein 1</fullName>
    </recommendedName>
    <alternativeName>
        <fullName>dsRNA-binding protein 1</fullName>
    </alternativeName>
</protein>
<keyword id="KW-1185">Reference proteome</keyword>
<keyword id="KW-0677">Repeat</keyword>
<keyword id="KW-0694">RNA-binding</keyword>
<comment type="function">
    <text evidence="1">Binds double-stranded RNA.</text>
</comment>
<gene>
    <name type="primary">DRB1</name>
    <name type="ordered locus">Os01g0772000</name>
    <name type="ordered locus">LOC_Os01g56520</name>
    <name type="ORF">P0695H10.10</name>
</gene>
<feature type="chain" id="PRO_0000404678" description="Double-stranded RNA-binding protein 1">
    <location>
        <begin position="1"/>
        <end position="441"/>
    </location>
</feature>
<feature type="domain" description="DRBM 1" evidence="2">
    <location>
        <begin position="1"/>
        <end position="71"/>
    </location>
</feature>
<feature type="domain" description="DRBM 2" evidence="2">
    <location>
        <begin position="86"/>
        <end position="155"/>
    </location>
</feature>
<feature type="domain" description="DRBM 3" evidence="2">
    <location>
        <begin position="169"/>
        <end position="237"/>
    </location>
</feature>
<feature type="region of interest" description="Disordered" evidence="3">
    <location>
        <begin position="69"/>
        <end position="88"/>
    </location>
</feature>
<feature type="sequence conflict" description="In Ref. 4; AK069455." evidence="4" ref="4">
    <original>Q</original>
    <variation>R</variation>
    <location>
        <position position="162"/>
    </location>
</feature>
<reference key="1">
    <citation type="journal article" date="2002" name="Nature">
        <title>The genome sequence and structure of rice chromosome 1.</title>
        <authorList>
            <person name="Sasaki T."/>
            <person name="Matsumoto T."/>
            <person name="Yamamoto K."/>
            <person name="Sakata K."/>
            <person name="Baba T."/>
            <person name="Katayose Y."/>
            <person name="Wu J."/>
            <person name="Niimura Y."/>
            <person name="Cheng Z."/>
            <person name="Nagamura Y."/>
            <person name="Antonio B.A."/>
            <person name="Kanamori H."/>
            <person name="Hosokawa S."/>
            <person name="Masukawa M."/>
            <person name="Arikawa K."/>
            <person name="Chiden Y."/>
            <person name="Hayashi M."/>
            <person name="Okamoto M."/>
            <person name="Ando T."/>
            <person name="Aoki H."/>
            <person name="Arita K."/>
            <person name="Hamada M."/>
            <person name="Harada C."/>
            <person name="Hijishita S."/>
            <person name="Honda M."/>
            <person name="Ichikawa Y."/>
            <person name="Idonuma A."/>
            <person name="Iijima M."/>
            <person name="Ikeda M."/>
            <person name="Ikeno M."/>
            <person name="Ito S."/>
            <person name="Ito T."/>
            <person name="Ito Y."/>
            <person name="Ito Y."/>
            <person name="Iwabuchi A."/>
            <person name="Kamiya K."/>
            <person name="Karasawa W."/>
            <person name="Katagiri S."/>
            <person name="Kikuta A."/>
            <person name="Kobayashi N."/>
            <person name="Kono I."/>
            <person name="Machita K."/>
            <person name="Maehara T."/>
            <person name="Mizuno H."/>
            <person name="Mizubayashi T."/>
            <person name="Mukai Y."/>
            <person name="Nagasaki H."/>
            <person name="Nakashima M."/>
            <person name="Nakama Y."/>
            <person name="Nakamichi Y."/>
            <person name="Nakamura M."/>
            <person name="Namiki N."/>
            <person name="Negishi M."/>
            <person name="Ohta I."/>
            <person name="Ono N."/>
            <person name="Saji S."/>
            <person name="Sakai K."/>
            <person name="Shibata M."/>
            <person name="Shimokawa T."/>
            <person name="Shomura A."/>
            <person name="Song J."/>
            <person name="Takazaki Y."/>
            <person name="Terasawa K."/>
            <person name="Tsuji K."/>
            <person name="Waki K."/>
            <person name="Yamagata H."/>
            <person name="Yamane H."/>
            <person name="Yoshiki S."/>
            <person name="Yoshihara R."/>
            <person name="Yukawa K."/>
            <person name="Zhong H."/>
            <person name="Iwama H."/>
            <person name="Endo T."/>
            <person name="Ito H."/>
            <person name="Hahn J.H."/>
            <person name="Kim H.-I."/>
            <person name="Eun M.-Y."/>
            <person name="Yano M."/>
            <person name="Jiang J."/>
            <person name="Gojobori T."/>
        </authorList>
    </citation>
    <scope>NUCLEOTIDE SEQUENCE [LARGE SCALE GENOMIC DNA]</scope>
    <source>
        <strain>cv. Nipponbare</strain>
    </source>
</reference>
<reference key="2">
    <citation type="journal article" date="2005" name="Nature">
        <title>The map-based sequence of the rice genome.</title>
        <authorList>
            <consortium name="International rice genome sequencing project (IRGSP)"/>
        </authorList>
    </citation>
    <scope>NUCLEOTIDE SEQUENCE [LARGE SCALE GENOMIC DNA]</scope>
    <source>
        <strain>cv. Nipponbare</strain>
    </source>
</reference>
<reference key="3">
    <citation type="journal article" date="2013" name="Rice">
        <title>Improvement of the Oryza sativa Nipponbare reference genome using next generation sequence and optical map data.</title>
        <authorList>
            <person name="Kawahara Y."/>
            <person name="de la Bastide M."/>
            <person name="Hamilton J.P."/>
            <person name="Kanamori H."/>
            <person name="McCombie W.R."/>
            <person name="Ouyang S."/>
            <person name="Schwartz D.C."/>
            <person name="Tanaka T."/>
            <person name="Wu J."/>
            <person name="Zhou S."/>
            <person name="Childs K.L."/>
            <person name="Davidson R.M."/>
            <person name="Lin H."/>
            <person name="Quesada-Ocampo L."/>
            <person name="Vaillancourt B."/>
            <person name="Sakai H."/>
            <person name="Lee S.S."/>
            <person name="Kim J."/>
            <person name="Numa H."/>
            <person name="Itoh T."/>
            <person name="Buell C.R."/>
            <person name="Matsumoto T."/>
        </authorList>
    </citation>
    <scope>GENOME REANNOTATION</scope>
    <source>
        <strain>cv. Nipponbare</strain>
    </source>
</reference>
<reference key="4">
    <citation type="journal article" date="2003" name="Science">
        <title>Collection, mapping, and annotation of over 28,000 cDNA clones from japonica rice.</title>
        <authorList>
            <consortium name="The rice full-length cDNA consortium"/>
        </authorList>
    </citation>
    <scope>NUCLEOTIDE SEQUENCE [LARGE SCALE MRNA]</scope>
    <source>
        <strain>cv. Nipponbare</strain>
    </source>
</reference>
<organism>
    <name type="scientific">Oryza sativa subsp. japonica</name>
    <name type="common">Rice</name>
    <dbReference type="NCBI Taxonomy" id="39947"/>
    <lineage>
        <taxon>Eukaryota</taxon>
        <taxon>Viridiplantae</taxon>
        <taxon>Streptophyta</taxon>
        <taxon>Embryophyta</taxon>
        <taxon>Tracheophyta</taxon>
        <taxon>Spermatophyta</taxon>
        <taxon>Magnoliopsida</taxon>
        <taxon>Liliopsida</taxon>
        <taxon>Poales</taxon>
        <taxon>Poaceae</taxon>
        <taxon>BOP clade</taxon>
        <taxon>Oryzoideae</taxon>
        <taxon>Oryzeae</taxon>
        <taxon>Oryzinae</taxon>
        <taxon>Oryza</taxon>
        <taxon>Oryza sativa</taxon>
    </lineage>
</organism>
<evidence type="ECO:0000250" key="1"/>
<evidence type="ECO:0000255" key="2">
    <source>
        <dbReference type="PROSITE-ProRule" id="PRU00266"/>
    </source>
</evidence>
<evidence type="ECO:0000256" key="3">
    <source>
        <dbReference type="SAM" id="MobiDB-lite"/>
    </source>
</evidence>
<evidence type="ECO:0000305" key="4"/>
<proteinExistence type="evidence at transcript level"/>
<accession>Q5N8Z0</accession>
<accession>A0A0P0V8T1</accession>
<dbReference type="EMBL" id="AP003295">
    <property type="protein sequence ID" value="BAD82066.1"/>
    <property type="molecule type" value="Genomic_DNA"/>
</dbReference>
<dbReference type="EMBL" id="AP014957">
    <property type="protein sequence ID" value="BAS74562.1"/>
    <property type="molecule type" value="Genomic_DNA"/>
</dbReference>
<dbReference type="EMBL" id="AK069455">
    <property type="status" value="NOT_ANNOTATED_CDS"/>
    <property type="molecule type" value="mRNA"/>
</dbReference>
<dbReference type="RefSeq" id="XP_015639013.1">
    <property type="nucleotide sequence ID" value="XM_015783527.1"/>
</dbReference>
<dbReference type="SMR" id="Q5N8Z0"/>
<dbReference type="FunCoup" id="Q5N8Z0">
    <property type="interactions" value="676"/>
</dbReference>
<dbReference type="STRING" id="39947.Q5N8Z0"/>
<dbReference type="PaxDb" id="39947-Q5N8Z0"/>
<dbReference type="EnsemblPlants" id="Os01t0772000-01">
    <property type="protein sequence ID" value="Os01t0772000-01"/>
    <property type="gene ID" value="Os01g0772000"/>
</dbReference>
<dbReference type="Gramene" id="Os01t0772000-01">
    <property type="protein sequence ID" value="Os01t0772000-01"/>
    <property type="gene ID" value="Os01g0772000"/>
</dbReference>
<dbReference type="eggNOG" id="ENOG502QTBA">
    <property type="taxonomic scope" value="Eukaryota"/>
</dbReference>
<dbReference type="HOGENOM" id="CLU_029158_1_0_1"/>
<dbReference type="InParanoid" id="Q5N8Z0"/>
<dbReference type="OMA" id="SEDKWVA"/>
<dbReference type="OrthoDB" id="5988181at2759"/>
<dbReference type="Proteomes" id="UP000000763">
    <property type="component" value="Chromosome 1"/>
</dbReference>
<dbReference type="Proteomes" id="UP000059680">
    <property type="component" value="Chromosome 1"/>
</dbReference>
<dbReference type="GO" id="GO:0003725">
    <property type="term" value="F:double-stranded RNA binding"/>
    <property type="evidence" value="ECO:0007669"/>
    <property type="project" value="InterPro"/>
</dbReference>
<dbReference type="CDD" id="cd19907">
    <property type="entry name" value="DSRM_AtDRB-like_rpt1"/>
    <property type="match status" value="1"/>
</dbReference>
<dbReference type="CDD" id="cd00048">
    <property type="entry name" value="DSRM_SF"/>
    <property type="match status" value="1"/>
</dbReference>
<dbReference type="Gene3D" id="3.30.160.20">
    <property type="match status" value="3"/>
</dbReference>
<dbReference type="InterPro" id="IPR044450">
    <property type="entry name" value="AtDRB-like_DSRM_1"/>
</dbReference>
<dbReference type="InterPro" id="IPR014720">
    <property type="entry name" value="dsRBD_dom"/>
</dbReference>
<dbReference type="PANTHER" id="PTHR46031">
    <property type="match status" value="1"/>
</dbReference>
<dbReference type="PANTHER" id="PTHR46031:SF36">
    <property type="entry name" value="DOUBLE-STRANDED RNA-BINDING PROTEIN 1"/>
    <property type="match status" value="1"/>
</dbReference>
<dbReference type="Pfam" id="PF00035">
    <property type="entry name" value="dsrm"/>
    <property type="match status" value="3"/>
</dbReference>
<dbReference type="SMART" id="SM00358">
    <property type="entry name" value="DSRM"/>
    <property type="match status" value="3"/>
</dbReference>
<dbReference type="SUPFAM" id="SSF54768">
    <property type="entry name" value="dsRNA-binding domain-like"/>
    <property type="match status" value="3"/>
</dbReference>
<dbReference type="PROSITE" id="PS50137">
    <property type="entry name" value="DS_RBD"/>
    <property type="match status" value="3"/>
</dbReference>
<sequence length="441" mass="47056">MYKSRLQELCQQRRWAPPEYTHRCAGPAHAPLFGATVSVNGVEFRTPEDAARSAKEAHNIAAKAAFDHLSSLPLPPPPPPSENQSSYKSQLQIYAQKKGKLLPSYQTIREGPGHASRFKSVVTVDGKAFESPEYFHTVKEAESAAAKLALMSLPQEASSSEQVPVQPLSYKNLLQELAQKHGFSLPVYSTTSDGSVQVPMFKSTVVFQDGSFQGEPANTKKQAEMNAARVAFQHFEDRRKNALSSTVLRGPHLGQGTVHISAGQVKIAEPVFSVPLASTATSHSATGATDRDYHSLGSTNPLPIAKSTNCADVHIQPCEFKDEKPAFPEPKTVLEVMDSSPELTPLEDAYSAPVASTSTVSSSGCGSDPLASASTVNSTGCGSVPLASASTVSSTGCGCSLLTNRVQVYPRRPDLVLPEGATVLPFSDDVWVAVSLPTLNH</sequence>
<name>DRB1_ORYSJ</name>